<sequence>MGNFIITERKKAKEERSNPQTDSMDDLLIRRLTDRNDKEAHLNELFQDNSGAIGGNIVSHDDALLNTLAILQKELKSKEQEIRRLKEVIALKNKNTERLNDELISGTIENNVLQQKLSDLKKEHSQLVARWLKKTEKETEAMNSEIDGTK</sequence>
<comment type="function">
    <text evidence="3 4 5 7 9 10 14 15 17 18">Stabilizes the ATG5-ATG12 conjugate and mediates the formation of the 350 kDa complex, which is necessary for autophagy. The ATG5-ATG12/ATG16 complex is required for efficient promotion of ATG8-conjugation to phosphatidylethanolamine and ATG8 localization to the pre-autophagosomal structure (PAS). Also recruits ATG3 to the PAS. Involved in endoplasmic reticulum-specific autophagic process and is essential for the survival of cells subjected to severe ER stress.</text>
</comment>
<comment type="subunit">
    <text evidence="3 5 8 10 12 16">Homodimer. Part of the 350 kDa complex which is at least composed of ATG5, ATG12 and ATG16. Several units of each may be present in this complex. Interacts directly with ATG12.</text>
</comment>
<comment type="interaction">
    <interactant intactId="EBI-27344">
        <id>Q03818</id>
    </interactant>
    <interactant intactId="EBI-2692">
        <id>P38316</id>
        <label>ATG12</label>
    </interactant>
    <organismsDiffer>false</organismsDiffer>
    <experiments>10</experiments>
</comment>
<comment type="interaction">
    <interactant intactId="EBI-27344">
        <id>Q03818</id>
    </interactant>
    <interactant intactId="EBI-27344">
        <id>Q03818</id>
        <label>ATG16</label>
    </interactant>
    <organismsDiffer>false</organismsDiffer>
    <experiments>3</experiments>
</comment>
<comment type="interaction">
    <interactant intactId="EBI-27344">
        <id>Q03818</id>
    </interactant>
    <interactant intactId="EBI-2664">
        <id>Q12380</id>
        <label>ATG5</label>
    </interactant>
    <organismsDiffer>false</organismsDiffer>
    <experiments>5</experiments>
</comment>
<comment type="subcellular location">
    <subcellularLocation>
        <location evidence="4 11 13 15">Preautophagosomal structure membrane</location>
        <topology evidence="4 11 13 15">Peripheral membrane protein</topology>
    </subcellularLocation>
</comment>
<comment type="miscellaneous">
    <text evidence="6">Present with 573 molecules/cell in log phase SD medium.</text>
</comment>
<comment type="similarity">
    <text evidence="19">Belongs to the ATG16 family.</text>
</comment>
<keyword id="KW-0002">3D-structure</keyword>
<keyword id="KW-0072">Autophagy</keyword>
<keyword id="KW-0175">Coiled coil</keyword>
<keyword id="KW-0472">Membrane</keyword>
<keyword id="KW-0653">Protein transport</keyword>
<keyword id="KW-1185">Reference proteome</keyword>
<keyword id="KW-0813">Transport</keyword>
<accession>Q03818</accession>
<accession>D6VZY1</accession>
<protein>
    <recommendedName>
        <fullName>Autophagy protein 16</fullName>
    </recommendedName>
    <alternativeName>
        <fullName>Cytoplasm to vacuole targeting protein 11</fullName>
    </alternativeName>
    <alternativeName>
        <fullName>SAP18 homolog</fullName>
    </alternativeName>
</protein>
<name>ATG16_YEAST</name>
<reference key="1">
    <citation type="journal article" date="1997" name="Nature">
        <title>The nucleotide sequence of Saccharomyces cerevisiae chromosome XIII.</title>
        <authorList>
            <person name="Bowman S."/>
            <person name="Churcher C.M."/>
            <person name="Badcock K."/>
            <person name="Brown D."/>
            <person name="Chillingworth T."/>
            <person name="Connor R."/>
            <person name="Dedman K."/>
            <person name="Devlin K."/>
            <person name="Gentles S."/>
            <person name="Hamlin N."/>
            <person name="Hunt S."/>
            <person name="Jagels K."/>
            <person name="Lye G."/>
            <person name="Moule S."/>
            <person name="Odell C."/>
            <person name="Pearson D."/>
            <person name="Rajandream M.A."/>
            <person name="Rice P."/>
            <person name="Skelton J."/>
            <person name="Walsh S.V."/>
            <person name="Whitehead S."/>
            <person name="Barrell B.G."/>
        </authorList>
    </citation>
    <scope>NUCLEOTIDE SEQUENCE [LARGE SCALE GENOMIC DNA]</scope>
    <source>
        <strain>ATCC 204508 / S288c</strain>
    </source>
</reference>
<reference key="2">
    <citation type="journal article" date="2014" name="G3 (Bethesda)">
        <title>The reference genome sequence of Saccharomyces cerevisiae: Then and now.</title>
        <authorList>
            <person name="Engel S.R."/>
            <person name="Dietrich F.S."/>
            <person name="Fisk D.G."/>
            <person name="Binkley G."/>
            <person name="Balakrishnan R."/>
            <person name="Costanzo M.C."/>
            <person name="Dwight S.S."/>
            <person name="Hitz B.C."/>
            <person name="Karra K."/>
            <person name="Nash R.S."/>
            <person name="Weng S."/>
            <person name="Wong E.D."/>
            <person name="Lloyd P."/>
            <person name="Skrzypek M.S."/>
            <person name="Miyasato S.R."/>
            <person name="Simison M."/>
            <person name="Cherry J.M."/>
        </authorList>
    </citation>
    <scope>GENOME REANNOTATION</scope>
    <source>
        <strain>ATCC 204508 / S288c</strain>
    </source>
</reference>
<reference key="3">
    <citation type="journal article" date="1993" name="FEBS Lett.">
        <title>Isolation and characterization of autophagy-defective mutants of Saccharomyces cerevisiae.</title>
        <authorList>
            <person name="Tsukada M."/>
            <person name="Ohsumi Y."/>
        </authorList>
    </citation>
    <scope>FUNCTION</scope>
</reference>
<reference key="4">
    <citation type="journal article" date="1996" name="J. Biol. Chem.">
        <title>Genetic and phenotypic overlap between autophagy and the cytoplasm to vacuole protein targeting pathway.</title>
        <authorList>
            <person name="Harding T.M."/>
            <person name="Hefner-Gravink A."/>
            <person name="Thumm M."/>
            <person name="Klionsky D.J."/>
        </authorList>
    </citation>
    <scope>FUNCTION</scope>
</reference>
<reference key="5">
    <citation type="journal article" date="1999" name="EMBO J.">
        <title>Apg16p is required for the function of the Apg12p-Apg5p conjugate in the yeast autophagy pathway.</title>
        <authorList>
            <person name="Mizushima N."/>
            <person name="Noda T."/>
            <person name="Ohsumi Y."/>
        </authorList>
    </citation>
    <scope>FUNCTION</scope>
    <scope>INTERACTION WITH ATG5 AND ATG12</scope>
</reference>
<reference key="6">
    <citation type="journal article" date="2001" name="EMBO J.">
        <title>The pre-autophagosomal structure organized by concerted functions of APG genes is essential for autophagosome formation.</title>
        <authorList>
            <person name="Suzuki K."/>
            <person name="Kirisako T."/>
            <person name="Kamada Y."/>
            <person name="Mizushima N."/>
            <person name="Noda T."/>
            <person name="Ohsumi Y."/>
        </authorList>
    </citation>
    <scope>FUNCTION</scope>
    <scope>SUBCELLULAR LOCATION</scope>
</reference>
<reference key="7">
    <citation type="journal article" date="2002" name="J. Biol. Chem.">
        <title>Formation of the approximately 350-kDa Apg12-Apg5.Apg16 multimeric complex, mediated by Apg16 oligomerization, is essential for autophagy in yeast.</title>
        <authorList>
            <person name="Kuma A."/>
            <person name="Mizushima N."/>
            <person name="Ishihara N."/>
            <person name="Ohsumi Y."/>
        </authorList>
    </citation>
    <scope>FUNCTION</scope>
    <scope>IDENTIFICATION IN THE COMPLEX</scope>
</reference>
<reference key="8">
    <citation type="journal article" date="2003" name="Dev. Cell">
        <title>A unified nomenclature for yeast autophagy-related genes.</title>
        <authorList>
            <person name="Klionsky D.J."/>
            <person name="Cregg J.M."/>
            <person name="Dunn W.A. Jr."/>
            <person name="Emr S.D."/>
            <person name="Sakai Y."/>
            <person name="Sandoval I.V."/>
            <person name="Sibirny A."/>
            <person name="Subramani S."/>
            <person name="Thumm M."/>
            <person name="Veenhuis M."/>
            <person name="Ohsumi Y."/>
        </authorList>
    </citation>
    <scope>NOMENCLATURE</scope>
</reference>
<reference key="9">
    <citation type="journal article" date="2003" name="Nature">
        <title>Global analysis of protein expression in yeast.</title>
        <authorList>
            <person name="Ghaemmaghami S."/>
            <person name="Huh W.-K."/>
            <person name="Bower K."/>
            <person name="Howson R.W."/>
            <person name="Belle A."/>
            <person name="Dephoure N."/>
            <person name="O'Shea E.K."/>
            <person name="Weissman J.S."/>
        </authorList>
    </citation>
    <scope>LEVEL OF PROTEIN EXPRESSION [LARGE SCALE ANALYSIS]</scope>
</reference>
<reference key="10">
    <citation type="journal article" date="2004" name="Biosci. Biotechnol. Biochem.">
        <title>apg15-1, a UGA mutant allele in the Saccharomyces cerevisiae APG16 gene, and its suppression by a cytoplasmic factor.</title>
        <authorList>
            <person name="Okazaki H."/>
            <person name="Ono B."/>
            <person name="Ohsumi Y."/>
            <person name="Ohsumi M."/>
        </authorList>
    </citation>
    <scope>PHENOTYPIC CHARACTERIZATION</scope>
</reference>
<reference key="11">
    <citation type="journal article" date="2005" name="Autophagy">
        <title>Structure-function relationship of Atg12, a ubiquitin-like modifier essential for autophagy.</title>
        <authorList>
            <person name="Hanada T."/>
            <person name="Ohsumi Y."/>
        </authorList>
    </citation>
    <scope>IDENTIFICATION IN THE ATG5-ATG12/ATG16 COMPLEX</scope>
</reference>
<reference key="12">
    <citation type="journal article" date="2005" name="Traffic">
        <title>Starvation triggers the delivery of the endoplasmic reticulum to the vacuole via autophagy in yeast.</title>
        <authorList>
            <person name="Hamasaki M."/>
            <person name="Noda T."/>
            <person name="Baba M."/>
            <person name="Ohsumi Y."/>
        </authorList>
    </citation>
    <scope>FUNCTION</scope>
</reference>
<reference key="13">
    <citation type="journal article" date="2006" name="PLoS Biol.">
        <title>Autophagy counterbalances endoplasmic reticulum expansion during the unfolded protein response.</title>
        <authorList>
            <person name="Bernales S."/>
            <person name="McDonald K.L."/>
            <person name="Walter P."/>
        </authorList>
    </citation>
    <scope>FUNCTION</scope>
</reference>
<reference key="14">
    <citation type="journal article" date="2008" name="Mol. Biol. Cell">
        <title>The Atg1 kinase complex is involved in the regulation of protein recruitment to initiate sequestering vesicle formation for nonspecific autophagy in Saccharomyces cerevisiae.</title>
        <authorList>
            <person name="Cheong H."/>
            <person name="Nair U."/>
            <person name="Geng J."/>
            <person name="Klionsky D.J."/>
        </authorList>
    </citation>
    <scope>SUBCELLULAR LOCATION</scope>
</reference>
<reference key="15">
    <citation type="journal article" date="2010" name="J. Biol. Chem.">
        <title>Roles of the lipid-binding motifs of Atg18 and Atg21 in the cytoplasm to vacuole targeting pathway and autophagy.</title>
        <authorList>
            <person name="Nair U."/>
            <person name="Cao Y."/>
            <person name="Xie Z."/>
            <person name="Klionsky D.J."/>
        </authorList>
    </citation>
    <scope>SUBCELLULAR LOCATION</scope>
</reference>
<reference key="16">
    <citation type="journal article" date="2012" name="Autophagy">
        <title>Dual roles of Atg8-PE deconjugation by Atg4 in autophagy.</title>
        <authorList>
            <person name="Yu Z.Q."/>
            <person name="Ni T."/>
            <person name="Hong B."/>
            <person name="Wang H.Y."/>
            <person name="Jiang F.J."/>
            <person name="Zou S."/>
            <person name="Chen Y."/>
            <person name="Zheng X.L."/>
            <person name="Klionsky D.J."/>
            <person name="Liang Y."/>
            <person name="Xie Z."/>
        </authorList>
    </citation>
    <scope>FUNCTION</scope>
</reference>
<reference key="17">
    <citation type="journal article" date="2012" name="EMBO J.">
        <title>Mechanism and functions of membrane binding by the Atg5-Atg12/Atg16 complex during autophagosome formation.</title>
        <authorList>
            <person name="Romanov J."/>
            <person name="Walczak M."/>
            <person name="Ibiricu I."/>
            <person name="Schuchner S."/>
            <person name="Ogris E."/>
            <person name="Kraft C."/>
            <person name="Martens S."/>
        </authorList>
    </citation>
    <scope>FUNCTION</scope>
    <scope>SUBCELLULAR LOCATION OF THE ATG5-ATG2/ATG16 COMPLEX</scope>
</reference>
<reference key="18">
    <citation type="journal article" date="2007" name="J. Biol. Chem.">
        <title>Structure of Atg5.Atg16, a complex essential for autophagy.</title>
        <authorList>
            <person name="Matsushita M."/>
            <person name="Suzuki N.N."/>
            <person name="Obara K."/>
            <person name="Fujioka Y."/>
            <person name="Ohsumi Y."/>
            <person name="Inagaki F."/>
        </authorList>
    </citation>
    <scope>X-RAY CRYSTALLOGRAPHY (1.97 ANGSTROMS) OF 1-57 IN COMPLEX WITH ATG5</scope>
    <scope>MUTAGENESIS OF ARG-35 AND PHE-46</scope>
    <scope>FUNCTION</scope>
</reference>
<reference key="19">
    <citation type="journal article" date="2010" name="J. Biol. Chem.">
        <title>Dimeric coiled-coil structure of Saccharomyces cerevisiae Atg16 and its functional significance in autophagy.</title>
        <authorList>
            <person name="Fujioka Y."/>
            <person name="Noda N.N."/>
            <person name="Nakatogawa H."/>
            <person name="Ohsumi Y."/>
            <person name="Inagaki F."/>
        </authorList>
    </citation>
    <scope>X-RAY CRYSTALLOGRAPHY (2.5 ANGSTROMS)</scope>
    <scope>SUBUNIT</scope>
    <scope>MUTAGENESIS OF ASP-101; GLU-102; ILE-104; ILE-108 AND VAL-112</scope>
</reference>
<reference key="20">
    <citation type="journal article" date="2013" name="EMBO Rep.">
        <title>Structure of the Atg12-Atg5 conjugate reveals a platform for stimulating Atg8-PE conjugation.</title>
        <authorList>
            <person name="Noda N.N."/>
            <person name="Fujioka Y."/>
            <person name="Hanada T."/>
            <person name="Ohsumi Y."/>
            <person name="Inagaki F."/>
        </authorList>
    </citation>
    <scope>X-RAY CRYSTALLOGRAPHY (2.6 ANGSTROMS) OF 1-46 IN COMPLEX WITH ATG5 AND ATG12</scope>
</reference>
<dbReference type="EMBL" id="Z49705">
    <property type="protein sequence ID" value="CAA89795.1"/>
    <property type="molecule type" value="Genomic_DNA"/>
</dbReference>
<dbReference type="EMBL" id="BK006946">
    <property type="protein sequence ID" value="DAA10055.1"/>
    <property type="molecule type" value="Genomic_DNA"/>
</dbReference>
<dbReference type="PIR" id="S54517">
    <property type="entry name" value="S54517"/>
</dbReference>
<dbReference type="RefSeq" id="NP_013882.1">
    <property type="nucleotide sequence ID" value="NM_001182663.1"/>
</dbReference>
<dbReference type="PDB" id="2DYM">
    <property type="method" value="X-ray"/>
    <property type="resolution" value="2.20 A"/>
    <property type="chains" value="B/D/F/H=1-46"/>
</dbReference>
<dbReference type="PDB" id="2DYO">
    <property type="method" value="X-ray"/>
    <property type="resolution" value="1.97 A"/>
    <property type="chains" value="B=1-57"/>
</dbReference>
<dbReference type="PDB" id="3A7O">
    <property type="method" value="X-ray"/>
    <property type="resolution" value="2.50 A"/>
    <property type="chains" value="A/B/C/D/E/F=50-123"/>
</dbReference>
<dbReference type="PDB" id="3A7P">
    <property type="method" value="X-ray"/>
    <property type="resolution" value="2.80 A"/>
    <property type="chains" value="A/B=1-150"/>
</dbReference>
<dbReference type="PDB" id="3W1S">
    <property type="method" value="X-ray"/>
    <property type="resolution" value="2.60 A"/>
    <property type="chains" value="B=1-46"/>
</dbReference>
<dbReference type="PDBsum" id="2DYM"/>
<dbReference type="PDBsum" id="2DYO"/>
<dbReference type="PDBsum" id="3A7O"/>
<dbReference type="PDBsum" id="3A7P"/>
<dbReference type="PDBsum" id="3W1S"/>
<dbReference type="SMR" id="Q03818"/>
<dbReference type="BioGRID" id="35336">
    <property type="interactions" value="109"/>
</dbReference>
<dbReference type="ComplexPortal" id="CPX-1849">
    <property type="entry name" value="ATG12-ATG5-ATG16 complex"/>
</dbReference>
<dbReference type="DIP" id="DIP-2144N"/>
<dbReference type="FunCoup" id="Q03818">
    <property type="interactions" value="64"/>
</dbReference>
<dbReference type="IntAct" id="Q03818">
    <property type="interactions" value="8"/>
</dbReference>
<dbReference type="MINT" id="Q03818"/>
<dbReference type="STRING" id="4932.YMR159C"/>
<dbReference type="iPTMnet" id="Q03818"/>
<dbReference type="PaxDb" id="4932-YMR159C"/>
<dbReference type="PeptideAtlas" id="Q03818"/>
<dbReference type="EnsemblFungi" id="YMR159C_mRNA">
    <property type="protein sequence ID" value="YMR159C"/>
    <property type="gene ID" value="YMR159C"/>
</dbReference>
<dbReference type="GeneID" id="855194"/>
<dbReference type="KEGG" id="sce:YMR159C"/>
<dbReference type="AGR" id="SGD:S000004769"/>
<dbReference type="SGD" id="S000004769">
    <property type="gene designation" value="ATG16"/>
</dbReference>
<dbReference type="VEuPathDB" id="FungiDB:YMR159C"/>
<dbReference type="eggNOG" id="ENOG502S6TV">
    <property type="taxonomic scope" value="Eukaryota"/>
</dbReference>
<dbReference type="HOGENOM" id="CLU_158825_0_0_1"/>
<dbReference type="InParanoid" id="Q03818"/>
<dbReference type="OMA" id="QLRNKDY"/>
<dbReference type="OrthoDB" id="8949486at2759"/>
<dbReference type="BioCyc" id="YEAST:G3O-32849-MONOMER"/>
<dbReference type="BioGRID-ORCS" id="855194">
    <property type="hits" value="0 hits in 10 CRISPR screens"/>
</dbReference>
<dbReference type="EvolutionaryTrace" id="Q03818"/>
<dbReference type="PRO" id="PR:Q03818"/>
<dbReference type="Proteomes" id="UP000002311">
    <property type="component" value="Chromosome XIII"/>
</dbReference>
<dbReference type="RNAct" id="Q03818">
    <property type="molecule type" value="protein"/>
</dbReference>
<dbReference type="GO" id="GO:0034274">
    <property type="term" value="C:Atg12-Atg5-Atg16 complex"/>
    <property type="evidence" value="ECO:0000314"/>
    <property type="project" value="ComplexPortal"/>
</dbReference>
<dbReference type="GO" id="GO:0005737">
    <property type="term" value="C:cytoplasm"/>
    <property type="evidence" value="ECO:0007005"/>
    <property type="project" value="SGD"/>
</dbReference>
<dbReference type="GO" id="GO:0005829">
    <property type="term" value="C:cytosol"/>
    <property type="evidence" value="ECO:0007005"/>
    <property type="project" value="SGD"/>
</dbReference>
<dbReference type="GO" id="GO:0005634">
    <property type="term" value="C:nucleus"/>
    <property type="evidence" value="ECO:0007005"/>
    <property type="project" value="SGD"/>
</dbReference>
<dbReference type="GO" id="GO:0061908">
    <property type="term" value="C:phagophore"/>
    <property type="evidence" value="ECO:0000314"/>
    <property type="project" value="SGD"/>
</dbReference>
<dbReference type="GO" id="GO:0000407">
    <property type="term" value="C:phagophore assembly site"/>
    <property type="evidence" value="ECO:0000314"/>
    <property type="project" value="SGD"/>
</dbReference>
<dbReference type="GO" id="GO:0034045">
    <property type="term" value="C:phagophore assembly site membrane"/>
    <property type="evidence" value="ECO:0000303"/>
    <property type="project" value="ComplexPortal"/>
</dbReference>
<dbReference type="GO" id="GO:0120095">
    <property type="term" value="C:vacuole-isolation membrane contact site"/>
    <property type="evidence" value="ECO:0000314"/>
    <property type="project" value="SGD"/>
</dbReference>
<dbReference type="GO" id="GO:0042802">
    <property type="term" value="F:identical protein binding"/>
    <property type="evidence" value="ECO:0000353"/>
    <property type="project" value="IntAct"/>
</dbReference>
<dbReference type="GO" id="GO:0030674">
    <property type="term" value="F:protein-macromolecule adaptor activity"/>
    <property type="evidence" value="ECO:0000315"/>
    <property type="project" value="SGD"/>
</dbReference>
<dbReference type="GO" id="GO:0000045">
    <property type="term" value="P:autophagosome assembly"/>
    <property type="evidence" value="ECO:0000303"/>
    <property type="project" value="ComplexPortal"/>
</dbReference>
<dbReference type="GO" id="GO:1905037">
    <property type="term" value="P:autophagosome organization"/>
    <property type="evidence" value="ECO:0000315"/>
    <property type="project" value="SGD"/>
</dbReference>
<dbReference type="GO" id="GO:0006914">
    <property type="term" value="P:autophagy"/>
    <property type="evidence" value="ECO:0000315"/>
    <property type="project" value="UniProtKB"/>
</dbReference>
<dbReference type="GO" id="GO:0000422">
    <property type="term" value="P:autophagy of mitochondrion"/>
    <property type="evidence" value="ECO:0000315"/>
    <property type="project" value="SGD"/>
</dbReference>
<dbReference type="GO" id="GO:0032258">
    <property type="term" value="P:cytoplasm to vacuole targeting by the Cvt pathway"/>
    <property type="evidence" value="ECO:0000315"/>
    <property type="project" value="SGD"/>
</dbReference>
<dbReference type="GO" id="GO:0016236">
    <property type="term" value="P:macroautophagy"/>
    <property type="evidence" value="ECO:0000314"/>
    <property type="project" value="ComplexPortal"/>
</dbReference>
<dbReference type="GO" id="GO:0044804">
    <property type="term" value="P:nucleophagy"/>
    <property type="evidence" value="ECO:0000315"/>
    <property type="project" value="SGD"/>
</dbReference>
<dbReference type="GO" id="GO:0034727">
    <property type="term" value="P:piecemeal microautophagy of the nucleus"/>
    <property type="evidence" value="ECO:0000315"/>
    <property type="project" value="SGD"/>
</dbReference>
<dbReference type="CDD" id="cd22887">
    <property type="entry name" value="Atg16_CCD"/>
    <property type="match status" value="1"/>
</dbReference>
<dbReference type="CDD" id="cd22882">
    <property type="entry name" value="Atg16_NTD"/>
    <property type="match status" value="1"/>
</dbReference>
<dbReference type="Gene3D" id="1.20.5.170">
    <property type="match status" value="1"/>
</dbReference>
<dbReference type="IDEAL" id="IID50085"/>
<dbReference type="InterPro" id="IPR013923">
    <property type="entry name" value="Autophagy-rel_prot_16_dom"/>
</dbReference>
<dbReference type="Pfam" id="PF08614">
    <property type="entry name" value="ATG16"/>
    <property type="match status" value="1"/>
</dbReference>
<proteinExistence type="evidence at protein level"/>
<feature type="chain" id="PRO_0000218595" description="Autophagy protein 16">
    <location>
        <begin position="1"/>
        <end position="150"/>
    </location>
</feature>
<feature type="region of interest" description="Disordered" evidence="2">
    <location>
        <begin position="1"/>
        <end position="23"/>
    </location>
</feature>
<feature type="coiled-coil region" evidence="1">
    <location>
        <begin position="58"/>
        <end position="130"/>
    </location>
</feature>
<feature type="compositionally biased region" description="Basic and acidic residues" evidence="2">
    <location>
        <begin position="7"/>
        <end position="17"/>
    </location>
</feature>
<feature type="mutagenesis site" description="Impairs interaction with ATG5and autophagy." evidence="10">
    <original>R</original>
    <variation>A</variation>
    <location>
        <position position="35"/>
    </location>
</feature>
<feature type="mutagenesis site" description="Impairs interaction with ATG5and autophagy." evidence="10">
    <original>F</original>
    <variation>A</variation>
    <location>
        <position position="46"/>
    </location>
</feature>
<feature type="mutagenesis site" description="Significantly reduces autophagic activity; when associated with A-102." evidence="12">
    <original>D</original>
    <variation>A</variation>
    <location>
        <position position="101"/>
    </location>
</feature>
<feature type="mutagenesis site" description="Significantly reduces autophagic activity; when associated with A-101." evidence="12">
    <original>E</original>
    <variation>A</variation>
    <location>
        <position position="102"/>
    </location>
</feature>
<feature type="mutagenesis site" description="Significantly reduces autophagic activity; when associated with A-108 and A-112." evidence="12">
    <original>I</original>
    <variation>A</variation>
    <location>
        <position position="104"/>
    </location>
</feature>
<feature type="mutagenesis site" description="Significantly reduces autophagic activity; when associated with A-104 and A-112." evidence="12">
    <original>I</original>
    <variation>A</variation>
    <location>
        <position position="108"/>
    </location>
</feature>
<feature type="mutagenesis site" description="Significantly reduces autophagic activity; when associated with A-104 and A-108." evidence="12">
    <original>V</original>
    <variation>A</variation>
    <location>
        <position position="112"/>
    </location>
</feature>
<feature type="helix" evidence="20">
    <location>
        <begin position="23"/>
        <end position="40"/>
    </location>
</feature>
<feature type="helix" evidence="20">
    <location>
        <begin position="43"/>
        <end position="45"/>
    </location>
</feature>
<feature type="turn" evidence="20">
    <location>
        <begin position="48"/>
        <end position="51"/>
    </location>
</feature>
<feature type="helix" evidence="21">
    <location>
        <begin position="61"/>
        <end position="117"/>
    </location>
</feature>
<organism>
    <name type="scientific">Saccharomyces cerevisiae (strain ATCC 204508 / S288c)</name>
    <name type="common">Baker's yeast</name>
    <dbReference type="NCBI Taxonomy" id="559292"/>
    <lineage>
        <taxon>Eukaryota</taxon>
        <taxon>Fungi</taxon>
        <taxon>Dikarya</taxon>
        <taxon>Ascomycota</taxon>
        <taxon>Saccharomycotina</taxon>
        <taxon>Saccharomycetes</taxon>
        <taxon>Saccharomycetales</taxon>
        <taxon>Saccharomycetaceae</taxon>
        <taxon>Saccharomyces</taxon>
    </lineage>
</organism>
<evidence type="ECO:0000255" key="1"/>
<evidence type="ECO:0000256" key="2">
    <source>
        <dbReference type="SAM" id="MobiDB-lite"/>
    </source>
</evidence>
<evidence type="ECO:0000269" key="3">
    <source>
    </source>
</evidence>
<evidence type="ECO:0000269" key="4">
    <source>
    </source>
</evidence>
<evidence type="ECO:0000269" key="5">
    <source>
    </source>
</evidence>
<evidence type="ECO:0000269" key="6">
    <source>
    </source>
</evidence>
<evidence type="ECO:0000269" key="7">
    <source>
    </source>
</evidence>
<evidence type="ECO:0000269" key="8">
    <source>
    </source>
</evidence>
<evidence type="ECO:0000269" key="9">
    <source>
    </source>
</evidence>
<evidence type="ECO:0000269" key="10">
    <source>
    </source>
</evidence>
<evidence type="ECO:0000269" key="11">
    <source>
    </source>
</evidence>
<evidence type="ECO:0000269" key="12">
    <source>
    </source>
</evidence>
<evidence type="ECO:0000269" key="13">
    <source>
    </source>
</evidence>
<evidence type="ECO:0000269" key="14">
    <source>
    </source>
</evidence>
<evidence type="ECO:0000269" key="15">
    <source>
    </source>
</evidence>
<evidence type="ECO:0000269" key="16">
    <source>
    </source>
</evidence>
<evidence type="ECO:0000269" key="17">
    <source>
    </source>
</evidence>
<evidence type="ECO:0000269" key="18">
    <source>
    </source>
</evidence>
<evidence type="ECO:0000305" key="19"/>
<evidence type="ECO:0007829" key="20">
    <source>
        <dbReference type="PDB" id="2DYO"/>
    </source>
</evidence>
<evidence type="ECO:0007829" key="21">
    <source>
        <dbReference type="PDB" id="3A7O"/>
    </source>
</evidence>
<gene>
    <name type="primary">ATG16</name>
    <name type="synonym">APG15</name>
    <name type="synonym">APG16</name>
    <name type="synonym">CVT11</name>
    <name type="synonym">SAP18</name>
    <name type="ordered locus">YMR159C</name>
    <name type="ORF">YM8520.08C</name>
</gene>